<reference key="1">
    <citation type="submission" date="2006-03" db="EMBL/GenBank/DDBJ databases">
        <title>Complete sequence of chromosome of Nitrobacter hamburgensis X14.</title>
        <authorList>
            <consortium name="US DOE Joint Genome Institute"/>
            <person name="Copeland A."/>
            <person name="Lucas S."/>
            <person name="Lapidus A."/>
            <person name="Barry K."/>
            <person name="Detter J.C."/>
            <person name="Glavina del Rio T."/>
            <person name="Hammon N."/>
            <person name="Israni S."/>
            <person name="Dalin E."/>
            <person name="Tice H."/>
            <person name="Pitluck S."/>
            <person name="Chain P."/>
            <person name="Malfatti S."/>
            <person name="Shin M."/>
            <person name="Vergez L."/>
            <person name="Schmutz J."/>
            <person name="Larimer F."/>
            <person name="Land M."/>
            <person name="Hauser L."/>
            <person name="Kyrpides N."/>
            <person name="Ivanova N."/>
            <person name="Ward B."/>
            <person name="Arp D."/>
            <person name="Klotz M."/>
            <person name="Stein L."/>
            <person name="O'Mullan G."/>
            <person name="Starkenburg S."/>
            <person name="Sayavedra L."/>
            <person name="Poret-Peterson A.T."/>
            <person name="Gentry M.E."/>
            <person name="Bruce D."/>
            <person name="Richardson P."/>
        </authorList>
    </citation>
    <scope>NUCLEOTIDE SEQUENCE [LARGE SCALE GENOMIC DNA]</scope>
    <source>
        <strain>DSM 10229 / NCIMB 13809 / X14</strain>
    </source>
</reference>
<feature type="chain" id="PRO_0000272111" description="Lipoprotein-releasing system ATP-binding protein LolD">
    <location>
        <begin position="1"/>
        <end position="232"/>
    </location>
</feature>
<feature type="domain" description="ABC transporter" evidence="1">
    <location>
        <begin position="11"/>
        <end position="231"/>
    </location>
</feature>
<feature type="binding site" evidence="1">
    <location>
        <begin position="47"/>
        <end position="54"/>
    </location>
    <ligand>
        <name>ATP</name>
        <dbReference type="ChEBI" id="CHEBI:30616"/>
    </ligand>
</feature>
<evidence type="ECO:0000255" key="1">
    <source>
        <dbReference type="HAMAP-Rule" id="MF_01708"/>
    </source>
</evidence>
<organism>
    <name type="scientific">Nitrobacter hamburgensis (strain DSM 10229 / NCIMB 13809 / X14)</name>
    <dbReference type="NCBI Taxonomy" id="323097"/>
    <lineage>
        <taxon>Bacteria</taxon>
        <taxon>Pseudomonadati</taxon>
        <taxon>Pseudomonadota</taxon>
        <taxon>Alphaproteobacteria</taxon>
        <taxon>Hyphomicrobiales</taxon>
        <taxon>Nitrobacteraceae</taxon>
        <taxon>Nitrobacter</taxon>
    </lineage>
</organism>
<name>LOLD_NITHX</name>
<accession>Q1QLB0</accession>
<keyword id="KW-0067">ATP-binding</keyword>
<keyword id="KW-0997">Cell inner membrane</keyword>
<keyword id="KW-1003">Cell membrane</keyword>
<keyword id="KW-0472">Membrane</keyword>
<keyword id="KW-0547">Nucleotide-binding</keyword>
<keyword id="KW-1185">Reference proteome</keyword>
<keyword id="KW-1278">Translocase</keyword>
<keyword id="KW-0813">Transport</keyword>
<sequence>MEQGAKEIPVVYLHDIRRQYTQGETKLTILDGTKLALWAGQSVALVAPSGSGKSTLLHIAGLLESPDAGEVYIGGTATSGLSDVERTRIRRTDIGFVYQSHRLLPEFTALENVMLPQMIRGLRRSETVKRAREILSYLGLEDRVTHRPAELSGGEQQRVAIARAVANAPRVLLADEPTGNLDPNTADHVFNALMQLVKATRVAMLIATHNMELADRMDRRVSLENGHVVELD</sequence>
<proteinExistence type="inferred from homology"/>
<comment type="function">
    <text evidence="1">Part of the ABC transporter complex LolCDE involved in the translocation of mature outer membrane-directed lipoproteins, from the inner membrane to the periplasmic chaperone, LolA. Responsible for the formation of the LolA-lipoprotein complex in an ATP-dependent manner.</text>
</comment>
<comment type="subunit">
    <text evidence="1">The complex is composed of two ATP-binding proteins (LolD) and two transmembrane proteins (LolC and LolE).</text>
</comment>
<comment type="subcellular location">
    <subcellularLocation>
        <location evidence="1">Cell inner membrane</location>
        <topology evidence="1">Peripheral membrane protein</topology>
    </subcellularLocation>
</comment>
<comment type="similarity">
    <text evidence="1">Belongs to the ABC transporter superfamily. Lipoprotein translocase (TC 3.A.1.125) family.</text>
</comment>
<gene>
    <name evidence="1" type="primary">lolD</name>
    <name type="ordered locus">Nham_2195</name>
</gene>
<dbReference type="EC" id="7.6.2.-" evidence="1"/>
<dbReference type="EMBL" id="CP000319">
    <property type="protein sequence ID" value="ABE62987.1"/>
    <property type="molecule type" value="Genomic_DNA"/>
</dbReference>
<dbReference type="RefSeq" id="WP_011510664.1">
    <property type="nucleotide sequence ID" value="NC_007964.1"/>
</dbReference>
<dbReference type="SMR" id="Q1QLB0"/>
<dbReference type="STRING" id="323097.Nham_2195"/>
<dbReference type="KEGG" id="nha:Nham_2195"/>
<dbReference type="eggNOG" id="COG1136">
    <property type="taxonomic scope" value="Bacteria"/>
</dbReference>
<dbReference type="HOGENOM" id="CLU_000604_1_22_5"/>
<dbReference type="OrthoDB" id="9786950at2"/>
<dbReference type="Proteomes" id="UP000001953">
    <property type="component" value="Chromosome"/>
</dbReference>
<dbReference type="GO" id="GO:0005886">
    <property type="term" value="C:plasma membrane"/>
    <property type="evidence" value="ECO:0007669"/>
    <property type="project" value="UniProtKB-SubCell"/>
</dbReference>
<dbReference type="GO" id="GO:0005524">
    <property type="term" value="F:ATP binding"/>
    <property type="evidence" value="ECO:0007669"/>
    <property type="project" value="UniProtKB-KW"/>
</dbReference>
<dbReference type="GO" id="GO:0016887">
    <property type="term" value="F:ATP hydrolysis activity"/>
    <property type="evidence" value="ECO:0007669"/>
    <property type="project" value="InterPro"/>
</dbReference>
<dbReference type="GO" id="GO:0022857">
    <property type="term" value="F:transmembrane transporter activity"/>
    <property type="evidence" value="ECO:0007669"/>
    <property type="project" value="TreeGrafter"/>
</dbReference>
<dbReference type="GO" id="GO:0044874">
    <property type="term" value="P:lipoprotein localization to outer membrane"/>
    <property type="evidence" value="ECO:0007669"/>
    <property type="project" value="TreeGrafter"/>
</dbReference>
<dbReference type="GO" id="GO:0089705">
    <property type="term" value="P:protein localization to outer membrane"/>
    <property type="evidence" value="ECO:0007669"/>
    <property type="project" value="TreeGrafter"/>
</dbReference>
<dbReference type="CDD" id="cd03255">
    <property type="entry name" value="ABC_MJ0796_LolCDE_FtsE"/>
    <property type="match status" value="1"/>
</dbReference>
<dbReference type="FunFam" id="3.40.50.300:FF:000032">
    <property type="entry name" value="Export ABC transporter ATP-binding protein"/>
    <property type="match status" value="1"/>
</dbReference>
<dbReference type="Gene3D" id="3.40.50.300">
    <property type="entry name" value="P-loop containing nucleotide triphosphate hydrolases"/>
    <property type="match status" value="1"/>
</dbReference>
<dbReference type="InterPro" id="IPR003593">
    <property type="entry name" value="AAA+_ATPase"/>
</dbReference>
<dbReference type="InterPro" id="IPR003439">
    <property type="entry name" value="ABC_transporter-like_ATP-bd"/>
</dbReference>
<dbReference type="InterPro" id="IPR017871">
    <property type="entry name" value="ABC_transporter-like_CS"/>
</dbReference>
<dbReference type="InterPro" id="IPR015854">
    <property type="entry name" value="ABC_transpr_LolD-like"/>
</dbReference>
<dbReference type="InterPro" id="IPR017911">
    <property type="entry name" value="MacB-like_ATP-bd"/>
</dbReference>
<dbReference type="InterPro" id="IPR027417">
    <property type="entry name" value="P-loop_NTPase"/>
</dbReference>
<dbReference type="PANTHER" id="PTHR24220">
    <property type="entry name" value="IMPORT ATP-BINDING PROTEIN"/>
    <property type="match status" value="1"/>
</dbReference>
<dbReference type="PANTHER" id="PTHR24220:SF689">
    <property type="entry name" value="LIPOPROTEIN-RELEASING SYSTEM ATP-BINDING PROTEIN LOLD"/>
    <property type="match status" value="1"/>
</dbReference>
<dbReference type="Pfam" id="PF00005">
    <property type="entry name" value="ABC_tran"/>
    <property type="match status" value="1"/>
</dbReference>
<dbReference type="SMART" id="SM00382">
    <property type="entry name" value="AAA"/>
    <property type="match status" value="1"/>
</dbReference>
<dbReference type="SUPFAM" id="SSF52540">
    <property type="entry name" value="P-loop containing nucleoside triphosphate hydrolases"/>
    <property type="match status" value="1"/>
</dbReference>
<dbReference type="PROSITE" id="PS00211">
    <property type="entry name" value="ABC_TRANSPORTER_1"/>
    <property type="match status" value="1"/>
</dbReference>
<dbReference type="PROSITE" id="PS50893">
    <property type="entry name" value="ABC_TRANSPORTER_2"/>
    <property type="match status" value="1"/>
</dbReference>
<dbReference type="PROSITE" id="PS51244">
    <property type="entry name" value="LOLD"/>
    <property type="match status" value="1"/>
</dbReference>
<protein>
    <recommendedName>
        <fullName evidence="1">Lipoprotein-releasing system ATP-binding protein LolD</fullName>
        <ecNumber evidence="1">7.6.2.-</ecNumber>
    </recommendedName>
</protein>